<gene>
    <name evidence="1" type="primary">ytfE</name>
    <name type="ordered locus">NT01EI_0431</name>
</gene>
<organism>
    <name type="scientific">Edwardsiella ictaluri (strain 93-146)</name>
    <dbReference type="NCBI Taxonomy" id="634503"/>
    <lineage>
        <taxon>Bacteria</taxon>
        <taxon>Pseudomonadati</taxon>
        <taxon>Pseudomonadota</taxon>
        <taxon>Gammaproteobacteria</taxon>
        <taxon>Enterobacterales</taxon>
        <taxon>Hafniaceae</taxon>
        <taxon>Edwardsiella</taxon>
    </lineage>
</organism>
<evidence type="ECO:0000255" key="1">
    <source>
        <dbReference type="HAMAP-Rule" id="MF_01606"/>
    </source>
</evidence>
<name>YTFE_EDWI9</name>
<keyword id="KW-0963">Cytoplasm</keyword>
<keyword id="KW-0408">Iron</keyword>
<keyword id="KW-0479">Metal-binding</keyword>
<keyword id="KW-0346">Stress response</keyword>
<reference key="1">
    <citation type="submission" date="2009-03" db="EMBL/GenBank/DDBJ databases">
        <title>Complete genome sequence of Edwardsiella ictaluri 93-146.</title>
        <authorList>
            <person name="Williams M.L."/>
            <person name="Gillaspy A.F."/>
            <person name="Dyer D.W."/>
            <person name="Thune R.L."/>
            <person name="Waldbieser G.C."/>
            <person name="Schuster S.C."/>
            <person name="Gipson J."/>
            <person name="Zaitshik J."/>
            <person name="Landry C."/>
            <person name="Lawrence M.L."/>
        </authorList>
    </citation>
    <scope>NUCLEOTIDE SEQUENCE [LARGE SCALE GENOMIC DNA]</scope>
    <source>
        <strain>93-146</strain>
    </source>
</reference>
<proteinExistence type="inferred from homology"/>
<accession>C5BF83</accession>
<dbReference type="EMBL" id="CP001600">
    <property type="protein sequence ID" value="ACR67669.1"/>
    <property type="molecule type" value="Genomic_DNA"/>
</dbReference>
<dbReference type="RefSeq" id="WP_015869872.1">
    <property type="nucleotide sequence ID" value="NZ_CP169062.1"/>
</dbReference>
<dbReference type="SMR" id="C5BF83"/>
<dbReference type="STRING" id="67780.B6E78_12925"/>
<dbReference type="GeneID" id="69537520"/>
<dbReference type="KEGG" id="eic:NT01EI_0431"/>
<dbReference type="PATRIC" id="fig|634503.3.peg.390"/>
<dbReference type="HOGENOM" id="CLU_076075_2_0_6"/>
<dbReference type="OrthoDB" id="9797132at2"/>
<dbReference type="Proteomes" id="UP000001485">
    <property type="component" value="Chromosome"/>
</dbReference>
<dbReference type="GO" id="GO:0005737">
    <property type="term" value="C:cytoplasm"/>
    <property type="evidence" value="ECO:0007669"/>
    <property type="project" value="UniProtKB-SubCell"/>
</dbReference>
<dbReference type="GO" id="GO:0046872">
    <property type="term" value="F:metal ion binding"/>
    <property type="evidence" value="ECO:0007669"/>
    <property type="project" value="UniProtKB-KW"/>
</dbReference>
<dbReference type="GO" id="GO:0030091">
    <property type="term" value="P:protein repair"/>
    <property type="evidence" value="ECO:0007669"/>
    <property type="project" value="UniProtKB-UniRule"/>
</dbReference>
<dbReference type="GO" id="GO:0051409">
    <property type="term" value="P:response to nitrosative stress"/>
    <property type="evidence" value="ECO:0007669"/>
    <property type="project" value="UniProtKB-UniRule"/>
</dbReference>
<dbReference type="GO" id="GO:0006979">
    <property type="term" value="P:response to oxidative stress"/>
    <property type="evidence" value="ECO:0007669"/>
    <property type="project" value="UniProtKB-UniRule"/>
</dbReference>
<dbReference type="CDD" id="cd12108">
    <property type="entry name" value="Hr-like"/>
    <property type="match status" value="1"/>
</dbReference>
<dbReference type="Gene3D" id="1.20.120.520">
    <property type="entry name" value="nmb1532 protein domain like"/>
    <property type="match status" value="1"/>
</dbReference>
<dbReference type="HAMAP" id="MF_01606">
    <property type="entry name" value="RIC_YtfE"/>
    <property type="match status" value="1"/>
</dbReference>
<dbReference type="InterPro" id="IPR023742">
    <property type="entry name" value="FeS-repair_YftE"/>
</dbReference>
<dbReference type="InterPro" id="IPR012312">
    <property type="entry name" value="Hemerythrin-like"/>
</dbReference>
<dbReference type="InterPro" id="IPR019903">
    <property type="entry name" value="RIC_family"/>
</dbReference>
<dbReference type="NCBIfam" id="TIGR03652">
    <property type="entry name" value="FeS_repair_RIC"/>
    <property type="match status" value="1"/>
</dbReference>
<dbReference type="NCBIfam" id="NF008221">
    <property type="entry name" value="PRK10992.1"/>
    <property type="match status" value="1"/>
</dbReference>
<dbReference type="PANTHER" id="PTHR36438">
    <property type="entry name" value="IRON-SULFUR CLUSTER REPAIR PROTEIN YTFE"/>
    <property type="match status" value="1"/>
</dbReference>
<dbReference type="PANTHER" id="PTHR36438:SF1">
    <property type="entry name" value="IRON-SULFUR CLUSTER REPAIR PROTEIN YTFE"/>
    <property type="match status" value="1"/>
</dbReference>
<dbReference type="Pfam" id="PF01814">
    <property type="entry name" value="Hemerythrin"/>
    <property type="match status" value="1"/>
</dbReference>
<dbReference type="Pfam" id="PF04405">
    <property type="entry name" value="ScdA_N"/>
    <property type="match status" value="1"/>
</dbReference>
<comment type="function">
    <text evidence="1">Di-iron-containing protein involved in the repair of iron-sulfur clusters damaged by oxidative and nitrosative stress conditions.</text>
</comment>
<comment type="subunit">
    <text evidence="1">Homodimer.</text>
</comment>
<comment type="subcellular location">
    <subcellularLocation>
        <location evidence="1">Cytoplasm</location>
    </subcellularLocation>
</comment>
<comment type="similarity">
    <text evidence="1">Belongs to the RIC family. YtfE subfamily.</text>
</comment>
<feature type="chain" id="PRO_0000406127" description="Iron-sulfur cluster repair protein YtfE">
    <location>
        <begin position="1"/>
        <end position="221"/>
    </location>
</feature>
<protein>
    <recommendedName>
        <fullName evidence="1">Iron-sulfur cluster repair protein YtfE</fullName>
    </recommendedName>
</protein>
<sequence>MTYRDRPLGELAISIPRATRLFRQYELDFCCGGKLTLQRAAARHSLDLVMLESQLAELDSTPDQHRDWRQAPLDELCAFIVTRYHQRHRDQLPELVLMAQKVEQVHTGKTGCPRGLAKQLDSLRQELDSHMMKEERILFPLIEQGEGARCHGPISVMEHEHRDAGELLDVIRFLTDNMTPPTGACTTWRALYAGISELINDLMEHVSLENNLLFPRALGDV</sequence>